<keyword id="KW-0903">Direct protein sequencing</keyword>
<keyword id="KW-0256">Endoplasmic reticulum</keyword>
<keyword id="KW-0349">Heme</keyword>
<keyword id="KW-0408">Iron</keyword>
<keyword id="KW-0472">Membrane</keyword>
<keyword id="KW-0479">Metal-binding</keyword>
<keyword id="KW-0492">Microsome</keyword>
<keyword id="KW-0503">Monooxygenase</keyword>
<keyword id="KW-0560">Oxidoreductase</keyword>
<protein>
    <recommendedName>
        <fullName>Cytochrome P450 3A5</fullName>
        <ecNumber>1.14.14.1</ecNumber>
    </recommendedName>
    <alternativeName>
        <fullName>6-beta-testosterone hydroxylase</fullName>
    </alternativeName>
    <alternativeName>
        <fullName>CYPIIIA5</fullName>
    </alternativeName>
    <alternativeName>
        <fullName>Cytochrome P450 FA</fullName>
    </alternativeName>
</protein>
<name>CP3A5_PAPSP</name>
<organism>
    <name type="scientific">Papio sp.</name>
    <name type="common">Baboon</name>
    <dbReference type="NCBI Taxonomy" id="61183"/>
    <lineage>
        <taxon>Eukaryota</taxon>
        <taxon>Metazoa</taxon>
        <taxon>Chordata</taxon>
        <taxon>Craniata</taxon>
        <taxon>Vertebrata</taxon>
        <taxon>Euteleostomi</taxon>
        <taxon>Mammalia</taxon>
        <taxon>Eutheria</taxon>
        <taxon>Euarchontoglires</taxon>
        <taxon>Primates</taxon>
        <taxon>Haplorrhini</taxon>
        <taxon>Catarrhini</taxon>
        <taxon>Cercopithecidae</taxon>
        <taxon>Cercopithecinae</taxon>
        <taxon>Papio</taxon>
    </lineage>
</organism>
<reference key="1">
    <citation type="journal article" date="1992" name="Eur. J. Biochem.">
        <title>Purification of two cytochrome P450 isozymes related to CYP2A and CYP3A gene families from monkey (baboon, Papio papio) liver microsomes. Cross reactivity with human forms.</title>
        <authorList>
            <person name="Dalet-Beluche I."/>
            <person name="Boulenc X."/>
            <person name="Fabre G."/>
            <person name="Maurel P."/>
            <person name="Bonfils C."/>
        </authorList>
    </citation>
    <scope>PROTEIN SEQUENCE</scope>
    <source>
        <tissue>Liver</tissue>
    </source>
</reference>
<sequence>MDLIPDLAVETWLLLAVTLV</sequence>
<proteinExistence type="evidence at protein level"/>
<comment type="function">
    <text>6-beta-testosterone hydroxylase.</text>
</comment>
<comment type="catalytic activity">
    <reaction>
        <text>an organic molecule + reduced [NADPH--hemoprotein reductase] + O2 = an alcohol + oxidized [NADPH--hemoprotein reductase] + H2O + H(+)</text>
        <dbReference type="Rhea" id="RHEA:17149"/>
        <dbReference type="Rhea" id="RHEA-COMP:11964"/>
        <dbReference type="Rhea" id="RHEA-COMP:11965"/>
        <dbReference type="ChEBI" id="CHEBI:15377"/>
        <dbReference type="ChEBI" id="CHEBI:15378"/>
        <dbReference type="ChEBI" id="CHEBI:15379"/>
        <dbReference type="ChEBI" id="CHEBI:30879"/>
        <dbReference type="ChEBI" id="CHEBI:57618"/>
        <dbReference type="ChEBI" id="CHEBI:58210"/>
        <dbReference type="ChEBI" id="CHEBI:142491"/>
        <dbReference type="EC" id="1.14.14.1"/>
    </reaction>
</comment>
<comment type="cofactor">
    <cofactor evidence="1">
        <name>heme</name>
        <dbReference type="ChEBI" id="CHEBI:30413"/>
    </cofactor>
</comment>
<comment type="subcellular location">
    <subcellularLocation>
        <location>Endoplasmic reticulum membrane</location>
        <topology>Peripheral membrane protein</topology>
    </subcellularLocation>
    <subcellularLocation>
        <location>Microsome membrane</location>
        <topology>Peripheral membrane protein</topology>
    </subcellularLocation>
</comment>
<comment type="induction">
    <text>By phenobarbital.</text>
</comment>
<comment type="similarity">
    <text evidence="2">Belongs to the cytochrome P450 family.</text>
</comment>
<feature type="chain" id="PRO_0000051788" description="Cytochrome P450 3A5">
    <location>
        <begin position="1"/>
        <end position="20" status="greater than"/>
    </location>
</feature>
<feature type="non-terminal residue">
    <location>
        <position position="20"/>
    </location>
</feature>
<accession>P80056</accession>
<dbReference type="EC" id="1.14.14.1"/>
<dbReference type="GO" id="GO:0005789">
    <property type="term" value="C:endoplasmic reticulum membrane"/>
    <property type="evidence" value="ECO:0007669"/>
    <property type="project" value="UniProtKB-SubCell"/>
</dbReference>
<dbReference type="GO" id="GO:0046872">
    <property type="term" value="F:metal ion binding"/>
    <property type="evidence" value="ECO:0007669"/>
    <property type="project" value="UniProtKB-KW"/>
</dbReference>
<dbReference type="GO" id="GO:0016712">
    <property type="term" value="F:oxidoreductase activity, acting on paired donors, with incorporation or reduction of molecular oxygen, reduced flavin or flavoprotein as one donor, and incorporation of one atom of oxygen"/>
    <property type="evidence" value="ECO:0007669"/>
    <property type="project" value="UniProtKB-EC"/>
</dbReference>
<dbReference type="GO" id="GO:0008210">
    <property type="term" value="P:estrogen metabolic process"/>
    <property type="evidence" value="ECO:0000250"/>
    <property type="project" value="UniProtKB"/>
</dbReference>
<evidence type="ECO:0000250" key="1"/>
<evidence type="ECO:0000305" key="2"/>